<name>PPAC_STRZT</name>
<sequence>MSKILVFGHQNPDSDAIGSSVAFAYLAKEAYGLDTEAVALGTPNEETAFVLNYFGVEAPRVITSAKAEGAEQVILTDHNEFQQSVSDIAEVEVYGVVDHHRVANFETASPLYMRLEPVGSASSIVYRMFKEHGVAVPKEIAGLMLSGLISDTLLLKSPTTHPTDKIIAPELAELAGVNLEEYGLAMLKAGTNLASKSAEELIDIDAKTFELNGNNVRVAQVNTVDIAEVLERQAEIEAAMQAANESNGYSDFVLMITDIVNSNSEILALGANMDKVEAAFNFKLENNHAFLAGAVSRKKQVVPQLTESFNA</sequence>
<evidence type="ECO:0000255" key="1">
    <source>
        <dbReference type="HAMAP-Rule" id="MF_00207"/>
    </source>
</evidence>
<feature type="chain" id="PRO_1000124664" description="Probable manganese-dependent inorganic pyrophosphatase">
    <location>
        <begin position="1"/>
        <end position="311"/>
    </location>
</feature>
<feature type="binding site" evidence="1">
    <location>
        <position position="9"/>
    </location>
    <ligand>
        <name>Mn(2+)</name>
        <dbReference type="ChEBI" id="CHEBI:29035"/>
        <label>1</label>
    </ligand>
</feature>
<feature type="binding site" evidence="1">
    <location>
        <position position="13"/>
    </location>
    <ligand>
        <name>Mn(2+)</name>
        <dbReference type="ChEBI" id="CHEBI:29035"/>
        <label>1</label>
    </ligand>
</feature>
<feature type="binding site" evidence="1">
    <location>
        <position position="15"/>
    </location>
    <ligand>
        <name>Mn(2+)</name>
        <dbReference type="ChEBI" id="CHEBI:29035"/>
        <label>2</label>
    </ligand>
</feature>
<feature type="binding site" evidence="1">
    <location>
        <position position="77"/>
    </location>
    <ligand>
        <name>Mn(2+)</name>
        <dbReference type="ChEBI" id="CHEBI:29035"/>
        <label>1</label>
    </ligand>
</feature>
<feature type="binding site" evidence="1">
    <location>
        <position position="77"/>
    </location>
    <ligand>
        <name>Mn(2+)</name>
        <dbReference type="ChEBI" id="CHEBI:29035"/>
        <label>2</label>
    </ligand>
</feature>
<feature type="binding site" evidence="1">
    <location>
        <position position="99"/>
    </location>
    <ligand>
        <name>Mn(2+)</name>
        <dbReference type="ChEBI" id="CHEBI:29035"/>
        <label>2</label>
    </ligand>
</feature>
<feature type="binding site" evidence="1">
    <location>
        <position position="151"/>
    </location>
    <ligand>
        <name>Mn(2+)</name>
        <dbReference type="ChEBI" id="CHEBI:29035"/>
        <label>2</label>
    </ligand>
</feature>
<gene>
    <name evidence="1" type="primary">ppaC</name>
    <name type="ordered locus">SPT_1472</name>
</gene>
<comment type="catalytic activity">
    <reaction evidence="1">
        <text>diphosphate + H2O = 2 phosphate + H(+)</text>
        <dbReference type="Rhea" id="RHEA:24576"/>
        <dbReference type="ChEBI" id="CHEBI:15377"/>
        <dbReference type="ChEBI" id="CHEBI:15378"/>
        <dbReference type="ChEBI" id="CHEBI:33019"/>
        <dbReference type="ChEBI" id="CHEBI:43474"/>
        <dbReference type="EC" id="3.6.1.1"/>
    </reaction>
</comment>
<comment type="cofactor">
    <cofactor evidence="1">
        <name>Mn(2+)</name>
        <dbReference type="ChEBI" id="CHEBI:29035"/>
    </cofactor>
    <text evidence="1">Binds 2 manganese ions per subunit.</text>
</comment>
<comment type="subcellular location">
    <subcellularLocation>
        <location evidence="1">Cytoplasm</location>
    </subcellularLocation>
</comment>
<comment type="similarity">
    <text evidence="1">Belongs to the PPase class C family.</text>
</comment>
<proteinExistence type="inferred from homology"/>
<reference key="1">
    <citation type="journal article" date="2010" name="Genome Biol.">
        <title>Structure and dynamics of the pan-genome of Streptococcus pneumoniae and closely related species.</title>
        <authorList>
            <person name="Donati C."/>
            <person name="Hiller N.L."/>
            <person name="Tettelin H."/>
            <person name="Muzzi A."/>
            <person name="Croucher N.J."/>
            <person name="Angiuoli S.V."/>
            <person name="Oggioni M."/>
            <person name="Dunning Hotopp J.C."/>
            <person name="Hu F.Z."/>
            <person name="Riley D.R."/>
            <person name="Covacci A."/>
            <person name="Mitchell T.J."/>
            <person name="Bentley S.D."/>
            <person name="Kilian M."/>
            <person name="Ehrlich G.D."/>
            <person name="Rappuoli R."/>
            <person name="Moxon E.R."/>
            <person name="Masignani V."/>
        </authorList>
    </citation>
    <scope>NUCLEOTIDE SEQUENCE [LARGE SCALE GENOMIC DNA]</scope>
    <source>
        <strain>Taiwan19F-14</strain>
    </source>
</reference>
<accession>C1CSF2</accession>
<organism>
    <name type="scientific">Streptococcus pneumoniae (strain Taiwan19F-14)</name>
    <dbReference type="NCBI Taxonomy" id="487213"/>
    <lineage>
        <taxon>Bacteria</taxon>
        <taxon>Bacillati</taxon>
        <taxon>Bacillota</taxon>
        <taxon>Bacilli</taxon>
        <taxon>Lactobacillales</taxon>
        <taxon>Streptococcaceae</taxon>
        <taxon>Streptococcus</taxon>
    </lineage>
</organism>
<dbReference type="EC" id="3.6.1.1" evidence="1"/>
<dbReference type="EMBL" id="CP000921">
    <property type="protein sequence ID" value="ACO22926.1"/>
    <property type="molecule type" value="Genomic_DNA"/>
</dbReference>
<dbReference type="RefSeq" id="WP_000036043.1">
    <property type="nucleotide sequence ID" value="NC_012469.1"/>
</dbReference>
<dbReference type="SMR" id="C1CSF2"/>
<dbReference type="KEGG" id="snt:SPT_1472"/>
<dbReference type="HOGENOM" id="CLU_025243_0_1_9"/>
<dbReference type="GO" id="GO:0005737">
    <property type="term" value="C:cytoplasm"/>
    <property type="evidence" value="ECO:0007669"/>
    <property type="project" value="UniProtKB-SubCell"/>
</dbReference>
<dbReference type="GO" id="GO:0004427">
    <property type="term" value="F:inorganic diphosphate phosphatase activity"/>
    <property type="evidence" value="ECO:0007669"/>
    <property type="project" value="UniProtKB-UniRule"/>
</dbReference>
<dbReference type="GO" id="GO:0030145">
    <property type="term" value="F:manganese ion binding"/>
    <property type="evidence" value="ECO:0007669"/>
    <property type="project" value="UniProtKB-UniRule"/>
</dbReference>
<dbReference type="FunFam" id="3.10.310.20:FF:000001">
    <property type="entry name" value="Probable manganese-dependent inorganic pyrophosphatase"/>
    <property type="match status" value="1"/>
</dbReference>
<dbReference type="FunFam" id="3.90.1640.10:FF:000001">
    <property type="entry name" value="Probable manganese-dependent inorganic pyrophosphatase"/>
    <property type="match status" value="1"/>
</dbReference>
<dbReference type="Gene3D" id="3.10.310.20">
    <property type="entry name" value="DHHA2 domain"/>
    <property type="match status" value="1"/>
</dbReference>
<dbReference type="Gene3D" id="3.90.1640.10">
    <property type="entry name" value="inorganic pyrophosphatase (n-terminal core)"/>
    <property type="match status" value="1"/>
</dbReference>
<dbReference type="HAMAP" id="MF_00207">
    <property type="entry name" value="PPase_C"/>
    <property type="match status" value="1"/>
</dbReference>
<dbReference type="InterPro" id="IPR001667">
    <property type="entry name" value="DDH_dom"/>
</dbReference>
<dbReference type="InterPro" id="IPR038763">
    <property type="entry name" value="DHH_sf"/>
</dbReference>
<dbReference type="InterPro" id="IPR004097">
    <property type="entry name" value="DHHA2"/>
</dbReference>
<dbReference type="InterPro" id="IPR038222">
    <property type="entry name" value="DHHA2_dom_sf"/>
</dbReference>
<dbReference type="InterPro" id="IPR022934">
    <property type="entry name" value="Mn-dep_inorganic_PyrPase"/>
</dbReference>
<dbReference type="InterPro" id="IPR051319">
    <property type="entry name" value="Oligoribo/pAp-PDE_c-di-AMP_PDE"/>
</dbReference>
<dbReference type="NCBIfam" id="NF003877">
    <property type="entry name" value="PRK05427.1"/>
    <property type="match status" value="1"/>
</dbReference>
<dbReference type="PANTHER" id="PTHR47618">
    <property type="entry name" value="BIFUNCTIONAL OLIGORIBONUCLEASE AND PAP PHOSPHATASE NRNA"/>
    <property type="match status" value="1"/>
</dbReference>
<dbReference type="PANTHER" id="PTHR47618:SF1">
    <property type="entry name" value="BIFUNCTIONAL OLIGORIBONUCLEASE AND PAP PHOSPHATASE NRNA"/>
    <property type="match status" value="1"/>
</dbReference>
<dbReference type="Pfam" id="PF01368">
    <property type="entry name" value="DHH"/>
    <property type="match status" value="1"/>
</dbReference>
<dbReference type="Pfam" id="PF02833">
    <property type="entry name" value="DHHA2"/>
    <property type="match status" value="1"/>
</dbReference>
<dbReference type="SMART" id="SM01131">
    <property type="entry name" value="DHHA2"/>
    <property type="match status" value="1"/>
</dbReference>
<dbReference type="SUPFAM" id="SSF64182">
    <property type="entry name" value="DHH phosphoesterases"/>
    <property type="match status" value="1"/>
</dbReference>
<keyword id="KW-0963">Cytoplasm</keyword>
<keyword id="KW-0378">Hydrolase</keyword>
<keyword id="KW-0464">Manganese</keyword>
<keyword id="KW-0479">Metal-binding</keyword>
<protein>
    <recommendedName>
        <fullName evidence="1">Probable manganese-dependent inorganic pyrophosphatase</fullName>
        <ecNumber evidence="1">3.6.1.1</ecNumber>
    </recommendedName>
    <alternativeName>
        <fullName evidence="1">Pyrophosphate phospho-hydrolase</fullName>
        <shortName evidence="1">PPase</shortName>
    </alternativeName>
</protein>